<accession>A8AAN4</accession>
<keyword id="KW-0963">Cytoplasm</keyword>
<keyword id="KW-0285">Flavoprotein</keyword>
<keyword id="KW-0288">FMN</keyword>
<keyword id="KW-0413">Isomerase</keyword>
<keyword id="KW-0414">Isoprene biosynthesis</keyword>
<keyword id="KW-0460">Magnesium</keyword>
<keyword id="KW-0479">Metal-binding</keyword>
<keyword id="KW-0521">NADP</keyword>
<keyword id="KW-1185">Reference proteome</keyword>
<reference key="1">
    <citation type="journal article" date="2008" name="Genome Biol.">
        <title>A genomic analysis of the archaeal system Ignicoccus hospitalis-Nanoarchaeum equitans.</title>
        <authorList>
            <person name="Podar M."/>
            <person name="Anderson I."/>
            <person name="Makarova K.S."/>
            <person name="Elkins J.G."/>
            <person name="Ivanova N."/>
            <person name="Wall M.A."/>
            <person name="Lykidis A."/>
            <person name="Mavromatis K."/>
            <person name="Sun H."/>
            <person name="Hudson M.E."/>
            <person name="Chen W."/>
            <person name="Deciu C."/>
            <person name="Hutchison D."/>
            <person name="Eads J.R."/>
            <person name="Anderson A."/>
            <person name="Fernandes F."/>
            <person name="Szeto E."/>
            <person name="Lapidus A."/>
            <person name="Kyrpides N.C."/>
            <person name="Saier M.H. Jr."/>
            <person name="Richardson P.M."/>
            <person name="Rachel R."/>
            <person name="Huber H."/>
            <person name="Eisen J.A."/>
            <person name="Koonin E.V."/>
            <person name="Keller M."/>
            <person name="Stetter K.O."/>
        </authorList>
    </citation>
    <scope>NUCLEOTIDE SEQUENCE [LARGE SCALE GENOMIC DNA]</scope>
    <source>
        <strain>KIN4/I / DSM 18386 / JCM 14125</strain>
    </source>
</reference>
<proteinExistence type="inferred from homology"/>
<feature type="chain" id="PRO_1000048438" description="Isopentenyl-diphosphate delta-isomerase">
    <location>
        <begin position="1"/>
        <end position="360"/>
    </location>
</feature>
<feature type="binding site" evidence="1">
    <location>
        <begin position="6"/>
        <end position="7"/>
    </location>
    <ligand>
        <name>substrate</name>
    </ligand>
</feature>
<feature type="binding site" evidence="1">
    <location>
        <position position="62"/>
    </location>
    <ligand>
        <name>FMN</name>
        <dbReference type="ChEBI" id="CHEBI:58210"/>
    </ligand>
</feature>
<feature type="binding site" evidence="1">
    <location>
        <begin position="63"/>
        <end position="65"/>
    </location>
    <ligand>
        <name>FMN</name>
        <dbReference type="ChEBI" id="CHEBI:58210"/>
    </ligand>
</feature>
<feature type="binding site" evidence="1">
    <location>
        <begin position="93"/>
        <end position="95"/>
    </location>
    <ligand>
        <name>substrate</name>
    </ligand>
</feature>
<feature type="binding site" evidence="1">
    <location>
        <position position="93"/>
    </location>
    <ligand>
        <name>FMN</name>
        <dbReference type="ChEBI" id="CHEBI:58210"/>
    </ligand>
</feature>
<feature type="binding site" evidence="1">
    <location>
        <position position="122"/>
    </location>
    <ligand>
        <name>FMN</name>
        <dbReference type="ChEBI" id="CHEBI:58210"/>
    </ligand>
</feature>
<feature type="binding site" evidence="1">
    <location>
        <position position="157"/>
    </location>
    <ligand>
        <name>substrate</name>
    </ligand>
</feature>
<feature type="binding site" evidence="1">
    <location>
        <position position="158"/>
    </location>
    <ligand>
        <name>Mg(2+)</name>
        <dbReference type="ChEBI" id="CHEBI:18420"/>
    </ligand>
</feature>
<feature type="binding site" evidence="1">
    <location>
        <position position="189"/>
    </location>
    <ligand>
        <name>FMN</name>
        <dbReference type="ChEBI" id="CHEBI:58210"/>
    </ligand>
</feature>
<feature type="binding site" evidence="1">
    <location>
        <position position="214"/>
    </location>
    <ligand>
        <name>FMN</name>
        <dbReference type="ChEBI" id="CHEBI:58210"/>
    </ligand>
</feature>
<feature type="binding site" evidence="1">
    <location>
        <position position="219"/>
    </location>
    <ligand>
        <name>FMN</name>
        <dbReference type="ChEBI" id="CHEBI:58210"/>
    </ligand>
</feature>
<feature type="binding site" evidence="1">
    <location>
        <begin position="272"/>
        <end position="274"/>
    </location>
    <ligand>
        <name>FMN</name>
        <dbReference type="ChEBI" id="CHEBI:58210"/>
    </ligand>
</feature>
<feature type="binding site" evidence="1">
    <location>
        <begin position="293"/>
        <end position="294"/>
    </location>
    <ligand>
        <name>FMN</name>
        <dbReference type="ChEBI" id="CHEBI:58210"/>
    </ligand>
</feature>
<evidence type="ECO:0000255" key="1">
    <source>
        <dbReference type="HAMAP-Rule" id="MF_00354"/>
    </source>
</evidence>
<dbReference type="EC" id="5.3.3.2" evidence="1"/>
<dbReference type="EMBL" id="CP000816">
    <property type="protein sequence ID" value="ABU81986.1"/>
    <property type="molecule type" value="Genomic_DNA"/>
</dbReference>
<dbReference type="RefSeq" id="WP_012122950.1">
    <property type="nucleotide sequence ID" value="NC_009776.1"/>
</dbReference>
<dbReference type="SMR" id="A8AAN4"/>
<dbReference type="STRING" id="453591.Igni_0804"/>
<dbReference type="GeneID" id="5562641"/>
<dbReference type="KEGG" id="iho:Igni_0804"/>
<dbReference type="eggNOG" id="arCOG00613">
    <property type="taxonomic scope" value="Archaea"/>
</dbReference>
<dbReference type="HOGENOM" id="CLU_065515_1_0_2"/>
<dbReference type="OrthoDB" id="371955at2157"/>
<dbReference type="PhylomeDB" id="A8AAN4"/>
<dbReference type="Proteomes" id="UP000000262">
    <property type="component" value="Chromosome"/>
</dbReference>
<dbReference type="GO" id="GO:0005737">
    <property type="term" value="C:cytoplasm"/>
    <property type="evidence" value="ECO:0007669"/>
    <property type="project" value="UniProtKB-SubCell"/>
</dbReference>
<dbReference type="GO" id="GO:0010181">
    <property type="term" value="F:FMN binding"/>
    <property type="evidence" value="ECO:0007669"/>
    <property type="project" value="UniProtKB-UniRule"/>
</dbReference>
<dbReference type="GO" id="GO:0004452">
    <property type="term" value="F:isopentenyl-diphosphate delta-isomerase activity"/>
    <property type="evidence" value="ECO:0007669"/>
    <property type="project" value="UniProtKB-UniRule"/>
</dbReference>
<dbReference type="GO" id="GO:0000287">
    <property type="term" value="F:magnesium ion binding"/>
    <property type="evidence" value="ECO:0007669"/>
    <property type="project" value="UniProtKB-UniRule"/>
</dbReference>
<dbReference type="GO" id="GO:0070402">
    <property type="term" value="F:NADPH binding"/>
    <property type="evidence" value="ECO:0007669"/>
    <property type="project" value="UniProtKB-UniRule"/>
</dbReference>
<dbReference type="GO" id="GO:0016491">
    <property type="term" value="F:oxidoreductase activity"/>
    <property type="evidence" value="ECO:0007669"/>
    <property type="project" value="InterPro"/>
</dbReference>
<dbReference type="GO" id="GO:0008299">
    <property type="term" value="P:isoprenoid biosynthetic process"/>
    <property type="evidence" value="ECO:0007669"/>
    <property type="project" value="UniProtKB-UniRule"/>
</dbReference>
<dbReference type="CDD" id="cd02811">
    <property type="entry name" value="IDI-2_FMN"/>
    <property type="match status" value="1"/>
</dbReference>
<dbReference type="Gene3D" id="3.20.20.70">
    <property type="entry name" value="Aldolase class I"/>
    <property type="match status" value="1"/>
</dbReference>
<dbReference type="HAMAP" id="MF_00354">
    <property type="entry name" value="Idi_2"/>
    <property type="match status" value="1"/>
</dbReference>
<dbReference type="InterPro" id="IPR013785">
    <property type="entry name" value="Aldolase_TIM"/>
</dbReference>
<dbReference type="InterPro" id="IPR000262">
    <property type="entry name" value="FMN-dep_DH"/>
</dbReference>
<dbReference type="InterPro" id="IPR011179">
    <property type="entry name" value="IPdP_isomerase"/>
</dbReference>
<dbReference type="NCBIfam" id="TIGR02151">
    <property type="entry name" value="IPP_isom_2"/>
    <property type="match status" value="1"/>
</dbReference>
<dbReference type="PANTHER" id="PTHR43665">
    <property type="entry name" value="ISOPENTENYL-DIPHOSPHATE DELTA-ISOMERASE"/>
    <property type="match status" value="1"/>
</dbReference>
<dbReference type="PANTHER" id="PTHR43665:SF1">
    <property type="entry name" value="ISOPENTENYL-DIPHOSPHATE DELTA-ISOMERASE"/>
    <property type="match status" value="1"/>
</dbReference>
<dbReference type="Pfam" id="PF01070">
    <property type="entry name" value="FMN_dh"/>
    <property type="match status" value="1"/>
</dbReference>
<dbReference type="PIRSF" id="PIRSF003314">
    <property type="entry name" value="IPP_isomerase"/>
    <property type="match status" value="1"/>
</dbReference>
<dbReference type="SUPFAM" id="SSF51395">
    <property type="entry name" value="FMN-linked oxidoreductases"/>
    <property type="match status" value="1"/>
</dbReference>
<organism>
    <name type="scientific">Ignicoccus hospitalis (strain KIN4/I / DSM 18386 / JCM 14125)</name>
    <dbReference type="NCBI Taxonomy" id="453591"/>
    <lineage>
        <taxon>Archaea</taxon>
        <taxon>Thermoproteota</taxon>
        <taxon>Thermoprotei</taxon>
        <taxon>Desulfurococcales</taxon>
        <taxon>Desulfurococcaceae</taxon>
        <taxon>Ignicoccus</taxon>
    </lineage>
</organism>
<comment type="function">
    <text evidence="1">Involved in the biosynthesis of isoprenoids. Catalyzes the 1,3-allylic rearrangement of the homoallylic substrate isopentenyl (IPP) to its allylic isomer, dimethylallyl diphosphate (DMAPP).</text>
</comment>
<comment type="catalytic activity">
    <reaction evidence="1">
        <text>isopentenyl diphosphate = dimethylallyl diphosphate</text>
        <dbReference type="Rhea" id="RHEA:23284"/>
        <dbReference type="ChEBI" id="CHEBI:57623"/>
        <dbReference type="ChEBI" id="CHEBI:128769"/>
        <dbReference type="EC" id="5.3.3.2"/>
    </reaction>
</comment>
<comment type="cofactor">
    <cofactor evidence="1">
        <name>FMN</name>
        <dbReference type="ChEBI" id="CHEBI:58210"/>
    </cofactor>
</comment>
<comment type="cofactor">
    <cofactor evidence="1">
        <name>NADPH</name>
        <dbReference type="ChEBI" id="CHEBI:57783"/>
    </cofactor>
</comment>
<comment type="cofactor">
    <cofactor evidence="1">
        <name>Mg(2+)</name>
        <dbReference type="ChEBI" id="CHEBI:18420"/>
    </cofactor>
</comment>
<comment type="subunit">
    <text evidence="1">Homooctamer. Dimer of tetramers.</text>
</comment>
<comment type="subcellular location">
    <subcellularLocation>
        <location evidence="1">Cytoplasm</location>
    </subcellularLocation>
</comment>
<comment type="similarity">
    <text evidence="1">Belongs to the IPP isomerase type 2 family.</text>
</comment>
<sequence length="360" mass="38987">METSNRKLDHLRITLLEDVEAGDTWLDFVKVPHRAVPELNLEEVVTEIEVFGKKLSAPLIVTGMTGGNEHAAKINAVIAEVVEELGLGMGVGSQRAAVERPELEWTFRIARERAPNALLIANLGAPQLLKGYGLEEIKKAIDMIDADAIAIHLNAAQESFQPEGDVDYKGLLNKLSELVDKVEKPIIIKETGAGLDYESVKALRELGIKAFDVSGSGGTSWVRVEMYRAREKGDEVLATVADWMSSWGIPTAASIMEARAAAPDALVIASGGIRDGLHAVKSLALGADLVGVALPALKAAYEGKEELKKFLKSMMLSIKIGLFLTGSPAPEHIKGKAIVLGPLKEWALERGIYEEWLRAR</sequence>
<name>IDI2_IGNH4</name>
<gene>
    <name evidence="1" type="primary">fni</name>
    <name type="ordered locus">Igni_0804</name>
</gene>
<protein>
    <recommendedName>
        <fullName evidence="1">Isopentenyl-diphosphate delta-isomerase</fullName>
        <shortName evidence="1">IPP isomerase</shortName>
        <ecNumber evidence="1">5.3.3.2</ecNumber>
    </recommendedName>
    <alternativeName>
        <fullName evidence="1">Isopentenyl diphosphate:dimethylallyl diphosphate isomerase</fullName>
    </alternativeName>
    <alternativeName>
        <fullName evidence="1">Isopentenyl pyrophosphate isomerase</fullName>
    </alternativeName>
    <alternativeName>
        <fullName evidence="1">Type 2 isopentenyl diphosphate isomerase</fullName>
        <shortName evidence="1">IDI-2</shortName>
    </alternativeName>
</protein>